<comment type="function">
    <text evidence="1">Catalyzes one step in the degradation of the inhibitory neurotransmitter gamma-aminobutyric acid (GABA).</text>
</comment>
<comment type="catalytic activity">
    <reaction>
        <text>succinate semialdehyde + NAD(+) + H2O = succinate + NADH + 2 H(+)</text>
        <dbReference type="Rhea" id="RHEA:13217"/>
        <dbReference type="ChEBI" id="CHEBI:15377"/>
        <dbReference type="ChEBI" id="CHEBI:15378"/>
        <dbReference type="ChEBI" id="CHEBI:30031"/>
        <dbReference type="ChEBI" id="CHEBI:57540"/>
        <dbReference type="ChEBI" id="CHEBI:57706"/>
        <dbReference type="ChEBI" id="CHEBI:57945"/>
        <dbReference type="EC" id="1.2.1.24"/>
    </reaction>
</comment>
<comment type="activity regulation">
    <text evidence="1">Redox-regulated. Inhibited under oxydizing conditions (By similarity).</text>
</comment>
<comment type="pathway">
    <text>Amino-acid degradation; 4-aminobutanoate degradation.</text>
</comment>
<comment type="subunit">
    <text evidence="1">Homotetramer.</text>
</comment>
<comment type="subcellular location">
    <subcellularLocation>
        <location evidence="1">Mitochondrion</location>
    </subcellularLocation>
</comment>
<comment type="similarity">
    <text evidence="7">Belongs to the aldehyde dehydrogenase family.</text>
</comment>
<name>SSDH_HYLLA</name>
<dbReference type="EC" id="1.2.1.24"/>
<dbReference type="EMBL" id="AJ891038">
    <property type="protein sequence ID" value="CAI69938.1"/>
    <property type="molecule type" value="mRNA"/>
</dbReference>
<dbReference type="SMR" id="Q3MSM3"/>
<dbReference type="BRENDA" id="1.2.1.24">
    <property type="organism ID" value="2731"/>
</dbReference>
<dbReference type="UniPathway" id="UPA00733"/>
<dbReference type="GO" id="GO:0005739">
    <property type="term" value="C:mitochondrion"/>
    <property type="evidence" value="ECO:0007669"/>
    <property type="project" value="UniProtKB-SubCell"/>
</dbReference>
<dbReference type="GO" id="GO:0042802">
    <property type="term" value="F:identical protein binding"/>
    <property type="evidence" value="ECO:0000250"/>
    <property type="project" value="UniProtKB"/>
</dbReference>
<dbReference type="GO" id="GO:0004777">
    <property type="term" value="F:succinate-semialdehyde dehydrogenase (NAD+) activity"/>
    <property type="evidence" value="ECO:0000250"/>
    <property type="project" value="UniProtKB"/>
</dbReference>
<dbReference type="GO" id="GO:0007417">
    <property type="term" value="P:central nervous system development"/>
    <property type="evidence" value="ECO:0000250"/>
    <property type="project" value="UniProtKB"/>
</dbReference>
<dbReference type="GO" id="GO:0009450">
    <property type="term" value="P:gamma-aminobutyric acid catabolic process"/>
    <property type="evidence" value="ECO:0000250"/>
    <property type="project" value="UniProtKB"/>
</dbReference>
<dbReference type="GO" id="GO:0006105">
    <property type="term" value="P:succinate metabolic process"/>
    <property type="evidence" value="ECO:0000250"/>
    <property type="project" value="UniProtKB"/>
</dbReference>
<dbReference type="CDD" id="cd07103">
    <property type="entry name" value="ALDH_F5_SSADH_GabD"/>
    <property type="match status" value="1"/>
</dbReference>
<dbReference type="FunFam" id="3.40.605.10:FF:000026">
    <property type="entry name" value="Aldehyde dehydrogenase, putative"/>
    <property type="match status" value="1"/>
</dbReference>
<dbReference type="FunFam" id="3.40.309.10:FF:000004">
    <property type="entry name" value="Succinate-semialdehyde dehydrogenase I"/>
    <property type="match status" value="1"/>
</dbReference>
<dbReference type="FunFam" id="3.40.605.10:FF:000096">
    <property type="entry name" value="Succinate-semialdehyde dehydrogenase, mitochondrial"/>
    <property type="match status" value="1"/>
</dbReference>
<dbReference type="Gene3D" id="3.40.605.10">
    <property type="entry name" value="Aldehyde Dehydrogenase, Chain A, domain 1"/>
    <property type="match status" value="1"/>
</dbReference>
<dbReference type="Gene3D" id="3.40.309.10">
    <property type="entry name" value="Aldehyde Dehydrogenase, Chain A, domain 2"/>
    <property type="match status" value="1"/>
</dbReference>
<dbReference type="InterPro" id="IPR016161">
    <property type="entry name" value="Ald_DH/histidinol_DH"/>
</dbReference>
<dbReference type="InterPro" id="IPR016163">
    <property type="entry name" value="Ald_DH_C"/>
</dbReference>
<dbReference type="InterPro" id="IPR016160">
    <property type="entry name" value="Ald_DH_CS_CYS"/>
</dbReference>
<dbReference type="InterPro" id="IPR029510">
    <property type="entry name" value="Ald_DH_CS_GLU"/>
</dbReference>
<dbReference type="InterPro" id="IPR016162">
    <property type="entry name" value="Ald_DH_N"/>
</dbReference>
<dbReference type="InterPro" id="IPR015590">
    <property type="entry name" value="Aldehyde_DH_dom"/>
</dbReference>
<dbReference type="InterPro" id="IPR050740">
    <property type="entry name" value="Aldehyde_DH_Superfamily"/>
</dbReference>
<dbReference type="InterPro" id="IPR010102">
    <property type="entry name" value="Succ_semiAld_DH"/>
</dbReference>
<dbReference type="NCBIfam" id="TIGR01780">
    <property type="entry name" value="SSADH"/>
    <property type="match status" value="1"/>
</dbReference>
<dbReference type="PANTHER" id="PTHR43353">
    <property type="entry name" value="SUCCINATE-SEMIALDEHYDE DEHYDROGENASE, MITOCHONDRIAL"/>
    <property type="match status" value="1"/>
</dbReference>
<dbReference type="PANTHER" id="PTHR43353:SF5">
    <property type="entry name" value="SUCCINATE-SEMIALDEHYDE DEHYDROGENASE, MITOCHONDRIAL"/>
    <property type="match status" value="1"/>
</dbReference>
<dbReference type="Pfam" id="PF00171">
    <property type="entry name" value="Aldedh"/>
    <property type="match status" value="1"/>
</dbReference>
<dbReference type="SUPFAM" id="SSF53720">
    <property type="entry name" value="ALDH-like"/>
    <property type="match status" value="1"/>
</dbReference>
<dbReference type="PROSITE" id="PS00070">
    <property type="entry name" value="ALDEHYDE_DEHYDR_CYS"/>
    <property type="match status" value="1"/>
</dbReference>
<dbReference type="PROSITE" id="PS00687">
    <property type="entry name" value="ALDEHYDE_DEHYDR_GLU"/>
    <property type="match status" value="1"/>
</dbReference>
<proteinExistence type="evidence at transcript level"/>
<reference key="1">
    <citation type="submission" date="2005-03" db="EMBL/GenBank/DDBJ databases">
        <title>Human succinic semialdehyde dehydrogenase variation in higher primates: intra and inter specific data.</title>
        <authorList>
            <person name="Blasi P."/>
            <person name="Palmerio F."/>
            <person name="Aiello A."/>
            <person name="Rocchi M."/>
            <person name="Malaspina P."/>
            <person name="Novelletto A."/>
        </authorList>
    </citation>
    <scope>NUCLEOTIDE SEQUENCE [MRNA]</scope>
</reference>
<sequence length="535" mass="57112">MATCFWLRSCGARRLGSTFPGCRLRPRAGGLVPASGPAPGPAQLRCYAGGLAGLSAALLRTDSFVGGRWLPAAATFPVQDPASGAALGMVADCGVREARAAVRAAYEAFCSWREVSAKERSSLLRKWYNLMIQNKDDLARIITAESGKPLKEAHGEILYSAFFLEWFSEEARRVYGDIIYTPAKDRRALVLKQPIGVAAVITPWNFPSAMITRKVGAALAAGCTVVVKPAEDTPFSALALAELASQAGIPSGVYNVIPCSRKNAKEVGEAICTDPLVSKISFTGSTTTGKILLHHAANSVKRVSMELGGLAPFIVFDSANVDQAVAGALASKFRNTGQTCVCSNRFLVQRGIHDAFVKAFAEAMKKNLHVGNGFEEGTTQGPLINEKAVEKVEKQVNDAVSKGATIVTGGKRHQLGKNFFEPTLLCNVTQDMLCTHEETFGPLAPVIKFDTEEEAIAIANAADVGLAGYFYSQDPAQIWRVAEQLEVGMVGVNEGLISSVECPFGGVKQSGLGREGSKYGIDEYLELKYVCYGGL</sequence>
<protein>
    <recommendedName>
        <fullName>Succinate-semialdehyde dehydrogenase, mitochondrial</fullName>
        <ecNumber>1.2.1.24</ecNumber>
    </recommendedName>
    <alternativeName>
        <fullName>Aldehyde dehydrogenase family 5 member A1</fullName>
    </alternativeName>
    <alternativeName>
        <fullName>NAD(+)-dependent succinic semialdehyde dehydrogenase</fullName>
    </alternativeName>
</protein>
<evidence type="ECO:0000250" key="1"/>
<evidence type="ECO:0000250" key="2">
    <source>
        <dbReference type="UniProtKB" id="P51649"/>
    </source>
</evidence>
<evidence type="ECO:0000250" key="3">
    <source>
        <dbReference type="UniProtKB" id="Q8BWF0"/>
    </source>
</evidence>
<evidence type="ECO:0000255" key="4"/>
<evidence type="ECO:0000255" key="5">
    <source>
        <dbReference type="PROSITE-ProRule" id="PRU10007"/>
    </source>
</evidence>
<evidence type="ECO:0000255" key="6">
    <source>
        <dbReference type="PROSITE-ProRule" id="PRU10008"/>
    </source>
</evidence>
<evidence type="ECO:0000305" key="7"/>
<organism>
    <name type="scientific">Hylobates lar</name>
    <name type="common">Lar gibbon</name>
    <name type="synonym">White-handed gibbon</name>
    <dbReference type="NCBI Taxonomy" id="9580"/>
    <lineage>
        <taxon>Eukaryota</taxon>
        <taxon>Metazoa</taxon>
        <taxon>Chordata</taxon>
        <taxon>Craniata</taxon>
        <taxon>Vertebrata</taxon>
        <taxon>Euteleostomi</taxon>
        <taxon>Mammalia</taxon>
        <taxon>Eutheria</taxon>
        <taxon>Euarchontoglires</taxon>
        <taxon>Primates</taxon>
        <taxon>Haplorrhini</taxon>
        <taxon>Catarrhini</taxon>
        <taxon>Hylobatidae</taxon>
        <taxon>Hylobates</taxon>
    </lineage>
</organism>
<gene>
    <name type="primary">ALDH5A1</name>
</gene>
<feature type="transit peptide" description="Mitochondrion" evidence="4">
    <location>
        <begin position="1"/>
        <end position="47"/>
    </location>
</feature>
<feature type="chain" id="PRO_0000042903" description="Succinate-semialdehyde dehydrogenase, mitochondrial">
    <location>
        <begin position="48"/>
        <end position="535"/>
    </location>
</feature>
<feature type="active site" description="Proton acceptor" evidence="5 6">
    <location>
        <position position="306"/>
    </location>
</feature>
<feature type="active site" description="Nucleophile" evidence="5 6">
    <location>
        <position position="340"/>
    </location>
</feature>
<feature type="binding site" evidence="1">
    <location>
        <position position="213"/>
    </location>
    <ligand>
        <name>NAD(+)</name>
        <dbReference type="ChEBI" id="CHEBI:57540"/>
    </ligand>
</feature>
<feature type="binding site" evidence="1">
    <location>
        <position position="213"/>
    </location>
    <ligand>
        <name>substrate</name>
    </ligand>
</feature>
<feature type="binding site" evidence="1">
    <location>
        <begin position="228"/>
        <end position="231"/>
    </location>
    <ligand>
        <name>NAD(+)</name>
        <dbReference type="ChEBI" id="CHEBI:57540"/>
    </ligand>
</feature>
<feature type="binding site" evidence="1">
    <location>
        <begin position="284"/>
        <end position="289"/>
    </location>
    <ligand>
        <name>NAD(+)</name>
        <dbReference type="ChEBI" id="CHEBI:57540"/>
    </ligand>
</feature>
<feature type="binding site" evidence="1">
    <location>
        <position position="334"/>
    </location>
    <ligand>
        <name>substrate</name>
    </ligand>
</feature>
<feature type="binding site" evidence="1">
    <location>
        <position position="498"/>
    </location>
    <ligand>
        <name>substrate</name>
    </ligand>
</feature>
<feature type="site" description="Transition state stabilizer" evidence="1">
    <location>
        <position position="205"/>
    </location>
</feature>
<feature type="modified residue" description="N6-acetyllysine; alternate" evidence="2">
    <location>
        <position position="126"/>
    </location>
</feature>
<feature type="modified residue" description="N6-succinyllysine; alternate" evidence="3">
    <location>
        <position position="126"/>
    </location>
</feature>
<feature type="modified residue" description="N6-succinyllysine" evidence="3">
    <location>
        <position position="135"/>
    </location>
</feature>
<feature type="modified residue" description="N6-succinyllysine" evidence="3">
    <location>
        <position position="184"/>
    </location>
</feature>
<feature type="modified residue" description="N6-acetyllysine; alternate" evidence="3">
    <location>
        <position position="265"/>
    </location>
</feature>
<feature type="modified residue" description="N6-succinyllysine; alternate" evidence="3">
    <location>
        <position position="265"/>
    </location>
</feature>
<feature type="modified residue" description="N6-acetyllysine" evidence="3">
    <location>
        <position position="365"/>
    </location>
</feature>
<feature type="modified residue" description="N6-succinyllysine" evidence="3">
    <location>
        <position position="402"/>
    </location>
</feature>
<feature type="modified residue" description="N6-acetyllysine" evidence="3">
    <location>
        <position position="411"/>
    </location>
</feature>
<feature type="modified residue" description="Phosphoserine" evidence="2">
    <location>
        <position position="499"/>
    </location>
</feature>
<feature type="disulfide bond" description="In inhibited form" evidence="1">
    <location>
        <begin position="340"/>
        <end position="342"/>
    </location>
</feature>
<accession>Q3MSM3</accession>
<keyword id="KW-0007">Acetylation</keyword>
<keyword id="KW-1015">Disulfide bond</keyword>
<keyword id="KW-0496">Mitochondrion</keyword>
<keyword id="KW-0520">NAD</keyword>
<keyword id="KW-0560">Oxidoreductase</keyword>
<keyword id="KW-0597">Phosphoprotein</keyword>
<keyword id="KW-0809">Transit peptide</keyword>